<sequence>MPAEGGKTDMERIGLFSEMEYITVGDKYVSQFNRPFNESASKNRQILPGGSKEMSNLQAGYFDPHFVRIFEGESYVNPNQVRRRYMMEEAKKNLSKAFLPSNGEKKPCGLGSYYGTIGGPVPFFSAQSKPKEKYEPPGKNLYTNPGKKGTGYGYANITIGKQFSHSSDLYDAAKLNNKKENEEHRRLLKGTAFKLNLYTREYFDTNPYMSEKPLPPIKKVEKKETVGNPFKPSSPGKKAGGMKAGTFDPYPSHSADPYVVKLKSPSSKSAKVFHPPGGPKSRPIESIMALNVKRALNMKNYKTASVQSY</sequence>
<organism>
    <name type="scientific">Bos taurus</name>
    <name type="common">Bovine</name>
    <dbReference type="NCBI Taxonomy" id="9913"/>
    <lineage>
        <taxon>Eukaryota</taxon>
        <taxon>Metazoa</taxon>
        <taxon>Chordata</taxon>
        <taxon>Craniata</taxon>
        <taxon>Vertebrata</taxon>
        <taxon>Euteleostomi</taxon>
        <taxon>Mammalia</taxon>
        <taxon>Eutheria</taxon>
        <taxon>Laurasiatheria</taxon>
        <taxon>Artiodactyla</taxon>
        <taxon>Ruminantia</taxon>
        <taxon>Pecora</taxon>
        <taxon>Bovidae</taxon>
        <taxon>Bovinae</taxon>
        <taxon>Bos</taxon>
    </lineage>
</organism>
<accession>Q2T9M0</accession>
<keyword id="KW-0002">3D-structure</keyword>
<keyword id="KW-0963">Cytoplasm</keyword>
<keyword id="KW-0206">Cytoskeleton</keyword>
<keyword id="KW-1185">Reference proteome</keyword>
<protein>
    <recommendedName>
        <fullName>Cilia-and flagella-associated protein 96</fullName>
    </recommendedName>
</protein>
<gene>
    <name type="primary">CFAP96</name>
</gene>
<proteinExistence type="evidence at protein level"/>
<reference key="1">
    <citation type="submission" date="2005-12" db="EMBL/GenBank/DDBJ databases">
        <authorList>
            <consortium name="NIH - Mammalian Gene Collection (MGC) project"/>
        </authorList>
    </citation>
    <scope>NUCLEOTIDE SEQUENCE [LARGE SCALE MRNA]</scope>
    <source>
        <strain>Crossbred X Angus</strain>
        <tissue>Liver</tissue>
    </source>
</reference>
<evidence type="ECO:0000250" key="1">
    <source>
        <dbReference type="UniProtKB" id="A7E2U8"/>
    </source>
</evidence>
<evidence type="ECO:0000256" key="2">
    <source>
        <dbReference type="SAM" id="MobiDB-lite"/>
    </source>
</evidence>
<evidence type="ECO:0000305" key="3"/>
<dbReference type="EMBL" id="BC111359">
    <property type="protein sequence ID" value="AAI11360.1"/>
    <property type="molecule type" value="mRNA"/>
</dbReference>
<dbReference type="RefSeq" id="NP_001033225.1">
    <property type="nucleotide sequence ID" value="NM_001038136.2"/>
</dbReference>
<dbReference type="PDB" id="8OTZ">
    <property type="method" value="EM"/>
    <property type="resolution" value="3.60 A"/>
    <property type="chains" value="W=1-309"/>
</dbReference>
<dbReference type="PDBsum" id="8OTZ"/>
<dbReference type="EMDB" id="EMD-17187"/>
<dbReference type="EMDB" id="EMD-50664"/>
<dbReference type="SMR" id="Q2T9M0"/>
<dbReference type="FunCoup" id="Q2T9M0">
    <property type="interactions" value="290"/>
</dbReference>
<dbReference type="STRING" id="9913.ENSBTAP00000045756"/>
<dbReference type="PaxDb" id="9913-ENSBTAP00000045756"/>
<dbReference type="GeneID" id="523361"/>
<dbReference type="KEGG" id="bta:523361"/>
<dbReference type="CTD" id="441054"/>
<dbReference type="eggNOG" id="ENOG502QVET">
    <property type="taxonomic scope" value="Eukaryota"/>
</dbReference>
<dbReference type="InParanoid" id="Q2T9M0"/>
<dbReference type="OrthoDB" id="283553at2759"/>
<dbReference type="Proteomes" id="UP000009136">
    <property type="component" value="Unplaced"/>
</dbReference>
<dbReference type="GO" id="GO:0005813">
    <property type="term" value="C:centrosome"/>
    <property type="evidence" value="ECO:0000250"/>
    <property type="project" value="UniProtKB"/>
</dbReference>
<dbReference type="GO" id="GO:0005881">
    <property type="term" value="C:cytoplasmic microtubule"/>
    <property type="evidence" value="ECO:0000318"/>
    <property type="project" value="GO_Central"/>
</dbReference>
<dbReference type="InterPro" id="IPR029358">
    <property type="entry name" value="CFAP96"/>
</dbReference>
<dbReference type="PANTHER" id="PTHR31144">
    <property type="entry name" value="UPF0602 PROTEIN C4ORF47"/>
    <property type="match status" value="1"/>
</dbReference>
<dbReference type="PANTHER" id="PTHR31144:SF1">
    <property type="entry name" value="UPF0602 PROTEIN C4ORF47"/>
    <property type="match status" value="1"/>
</dbReference>
<dbReference type="Pfam" id="PF15239">
    <property type="entry name" value="CFAP96-like"/>
    <property type="match status" value="1"/>
</dbReference>
<name>CFA96_BOVIN</name>
<feature type="chain" id="PRO_0000341949" description="Cilia-and flagella-associated protein 96">
    <location>
        <begin position="1"/>
        <end position="309"/>
    </location>
</feature>
<feature type="region of interest" description="Disordered" evidence="2">
    <location>
        <begin position="225"/>
        <end position="251"/>
    </location>
</feature>
<comment type="subcellular location">
    <subcellularLocation>
        <location evidence="1">Cytoplasm</location>
        <location evidence="1">Cytoskeleton</location>
        <location evidence="1">Microtubule organizing center</location>
        <location evidence="1">Centrosome</location>
    </subcellularLocation>
</comment>
<comment type="similarity">
    <text evidence="3">Belongs to the CFAP96 family.</text>
</comment>